<accession>Q9FJE6</accession>
<reference key="1">
    <citation type="journal article" date="1998" name="DNA Res.">
        <title>Structural analysis of Arabidopsis thaliana chromosome 5. VII. Sequence features of the regions of 1,013,767 bp covered by sixteen physically assigned P1 and TAC clones.</title>
        <authorList>
            <person name="Nakamura Y."/>
            <person name="Sato S."/>
            <person name="Asamizu E."/>
            <person name="Kaneko T."/>
            <person name="Kotani H."/>
            <person name="Miyajima N."/>
            <person name="Tabata S."/>
        </authorList>
    </citation>
    <scope>NUCLEOTIDE SEQUENCE [LARGE SCALE GENOMIC DNA]</scope>
    <source>
        <strain>cv. Columbia</strain>
    </source>
</reference>
<reference key="2">
    <citation type="journal article" date="2017" name="Plant J.">
        <title>Araport11: a complete reannotation of the Arabidopsis thaliana reference genome.</title>
        <authorList>
            <person name="Cheng C.Y."/>
            <person name="Krishnakumar V."/>
            <person name="Chan A.P."/>
            <person name="Thibaud-Nissen F."/>
            <person name="Schobel S."/>
            <person name="Town C.D."/>
        </authorList>
    </citation>
    <scope>GENOME REANNOTATION</scope>
    <source>
        <strain>cv. Columbia</strain>
    </source>
</reference>
<reference key="3">
    <citation type="journal article" date="2004" name="Plant Cell">
        <title>Genome-wide analysis of Arabidopsis pentatricopeptide repeat proteins reveals their essential role in organelle biogenesis.</title>
        <authorList>
            <person name="Lurin C."/>
            <person name="Andres C."/>
            <person name="Aubourg S."/>
            <person name="Bellaoui M."/>
            <person name="Bitton F."/>
            <person name="Bruyere C."/>
            <person name="Caboche M."/>
            <person name="Debast C."/>
            <person name="Gualberto J."/>
            <person name="Hoffmann B."/>
            <person name="Lecharny A."/>
            <person name="Le Ret M."/>
            <person name="Martin-Magniette M.-L."/>
            <person name="Mireau H."/>
            <person name="Peeters N."/>
            <person name="Renou J.-P."/>
            <person name="Szurek B."/>
            <person name="Taconnat L."/>
            <person name="Small I."/>
        </authorList>
    </citation>
    <scope>GENE FAMILY</scope>
</reference>
<sequence length="907" mass="101633">MKLPCTIRSITSSHFRNSFRNVSSVIDSAQEECRIAEDKQFVDAVKRIVRGKRSWEIALSSELVSRRLKTVHVEEILIGTIDDPKLGLRFFNFLGLHRGFDHSTASFCILIHALVKANLFWPASSLLQTLLLRALKPSDVFNVLFSCYEKCKLSSSSSFDLLIQHYVRSRRVLDGVLVFKMMITKVSLLPEVRTLSALLHGLVKFRHFGLAMELFNDMVSVGIRPDVYIYTGVIRSLCELKDLSRAKEMIAHMEATGCDVNIVPYNVLIDGLCKKQKVWEAVGIKKDLAGKDLKPDVVTYCTLVYGLCKVQEFEIGLEMMDEMLCLRFSPSEAAVSSLVEGLRKRGKIEEALNLVKRVVDFGVSPNLFVYNALIDSLCKGRKFHEAELLFDRMGKIGLRPNDVTYSILIDMFCRRGKLDTALSFLGEMVDTGLKLSVYPYNSLINGHCKFGDISAAEGFMAEMINKKLEPTVVTYTSLMGGYCSKGKINKALRLYHEMTGKGIAPSIYTFTTLLSGLFRAGLIRDAVKLFNEMAEWNVKPNRVTYNVMIEGYCEEGDMSKAFEFLKEMTEKGIVPDTYSYRPLIHGLCLTGQASEAKVFVDGLHKGNCELNEICYTGLLHGFCREGKLEEALSVCQEMVQRGVDLDLVCYGVLIDGSLKHKDRKLFFGLLKEMHDRGLKPDDVIYTSMIDAKSKTGDFKEAFGIWDLMINEGCVPNEVTYTAVINGLCKAGFVNEAEVLCSKMQPVSSVPNQVTYGCFLDILTKGEVDMQKAVELHNAILKGLLANTATYNMLIRGFCRQGRIEEASELITRMIGDGVSPDCITYTTMINELCRRNDVKKAIELWNSMTEKGIRPDRVAYNTLIHGCCVAGEMGKATELRNEMLRQGLIPNNKTSRTTTSNDTSSKS</sequence>
<feature type="chain" id="PRO_0000363574" description="Putative pentatricopeptide repeat-containing protein At5g59900">
    <location>
        <begin position="1"/>
        <end position="907"/>
    </location>
</feature>
<feature type="repeat" description="PPR 1">
    <location>
        <begin position="103"/>
        <end position="137"/>
    </location>
</feature>
<feature type="repeat" description="PPR 2">
    <location>
        <begin position="155"/>
        <end position="185"/>
    </location>
</feature>
<feature type="repeat" description="PPR 3">
    <location>
        <begin position="191"/>
        <end position="225"/>
    </location>
</feature>
<feature type="repeat" description="PPR 4">
    <location>
        <begin position="226"/>
        <end position="260"/>
    </location>
</feature>
<feature type="repeat" description="PPR 5">
    <location>
        <begin position="261"/>
        <end position="295"/>
    </location>
</feature>
<feature type="repeat" description="PPR 6">
    <location>
        <begin position="296"/>
        <end position="330"/>
    </location>
</feature>
<feature type="repeat" description="PPR 7">
    <location>
        <begin position="331"/>
        <end position="365"/>
    </location>
</feature>
<feature type="repeat" description="PPR 8">
    <location>
        <begin position="366"/>
        <end position="400"/>
    </location>
</feature>
<feature type="repeat" description="PPR 9">
    <location>
        <begin position="401"/>
        <end position="435"/>
    </location>
</feature>
<feature type="repeat" description="PPR 10">
    <location>
        <begin position="436"/>
        <end position="470"/>
    </location>
</feature>
<feature type="repeat" description="PPR 11">
    <location>
        <begin position="471"/>
        <end position="505"/>
    </location>
</feature>
<feature type="repeat" description="PPR 12">
    <location>
        <begin position="506"/>
        <end position="540"/>
    </location>
</feature>
<feature type="repeat" description="PPR 13">
    <location>
        <begin position="541"/>
        <end position="575"/>
    </location>
</feature>
<feature type="repeat" description="PPR 14">
    <location>
        <begin position="576"/>
        <end position="610"/>
    </location>
</feature>
<feature type="repeat" description="PPR 15">
    <location>
        <begin position="611"/>
        <end position="645"/>
    </location>
</feature>
<feature type="repeat" description="PPR 16">
    <location>
        <begin position="646"/>
        <end position="680"/>
    </location>
</feature>
<feature type="repeat" description="PPR 17">
    <location>
        <begin position="681"/>
        <end position="715"/>
    </location>
</feature>
<feature type="repeat" description="PPR 18">
    <location>
        <begin position="716"/>
        <end position="750"/>
    </location>
</feature>
<feature type="repeat" description="PPR 19">
    <location>
        <begin position="751"/>
        <end position="782"/>
    </location>
</feature>
<feature type="repeat" description="PPR 20">
    <location>
        <begin position="786"/>
        <end position="820"/>
    </location>
</feature>
<feature type="repeat" description="PPR 21">
    <location>
        <begin position="821"/>
        <end position="855"/>
    </location>
</feature>
<feature type="repeat" description="PPR 22">
    <location>
        <begin position="856"/>
        <end position="890"/>
    </location>
</feature>
<feature type="region of interest" description="Disordered" evidence="1">
    <location>
        <begin position="887"/>
        <end position="907"/>
    </location>
</feature>
<feature type="compositionally biased region" description="Low complexity" evidence="1">
    <location>
        <begin position="891"/>
        <end position="907"/>
    </location>
</feature>
<protein>
    <recommendedName>
        <fullName>Putative pentatricopeptide repeat-containing protein At5g59900</fullName>
    </recommendedName>
</protein>
<name>PP437_ARATH</name>
<keyword id="KW-1185">Reference proteome</keyword>
<keyword id="KW-0677">Repeat</keyword>
<evidence type="ECO:0000256" key="1">
    <source>
        <dbReference type="SAM" id="MobiDB-lite"/>
    </source>
</evidence>
<evidence type="ECO:0000305" key="2"/>
<organism>
    <name type="scientific">Arabidopsis thaliana</name>
    <name type="common">Mouse-ear cress</name>
    <dbReference type="NCBI Taxonomy" id="3702"/>
    <lineage>
        <taxon>Eukaryota</taxon>
        <taxon>Viridiplantae</taxon>
        <taxon>Streptophyta</taxon>
        <taxon>Embryophyta</taxon>
        <taxon>Tracheophyta</taxon>
        <taxon>Spermatophyta</taxon>
        <taxon>Magnoliopsida</taxon>
        <taxon>eudicotyledons</taxon>
        <taxon>Gunneridae</taxon>
        <taxon>Pentapetalae</taxon>
        <taxon>rosids</taxon>
        <taxon>malvids</taxon>
        <taxon>Brassicales</taxon>
        <taxon>Brassicaceae</taxon>
        <taxon>Camelineae</taxon>
        <taxon>Arabidopsis</taxon>
    </lineage>
</organism>
<dbReference type="EMBL" id="AB015475">
    <property type="protein sequence ID" value="BAB08358.1"/>
    <property type="molecule type" value="Genomic_DNA"/>
</dbReference>
<dbReference type="EMBL" id="CP002688">
    <property type="protein sequence ID" value="AED97249.1"/>
    <property type="molecule type" value="Genomic_DNA"/>
</dbReference>
<dbReference type="RefSeq" id="NP_200798.1">
    <property type="nucleotide sequence ID" value="NM_125383.2"/>
</dbReference>
<dbReference type="SMR" id="Q9FJE6"/>
<dbReference type="FunCoup" id="Q9FJE6">
    <property type="interactions" value="249"/>
</dbReference>
<dbReference type="PaxDb" id="3702-AT5G59900.1"/>
<dbReference type="ProteomicsDB" id="249318"/>
<dbReference type="EnsemblPlants" id="AT5G59900.1">
    <property type="protein sequence ID" value="AT5G59900.1"/>
    <property type="gene ID" value="AT5G59900"/>
</dbReference>
<dbReference type="GeneID" id="836112"/>
<dbReference type="Gramene" id="AT5G59900.1">
    <property type="protein sequence ID" value="AT5G59900.1"/>
    <property type="gene ID" value="AT5G59900"/>
</dbReference>
<dbReference type="KEGG" id="ath:AT5G59900"/>
<dbReference type="Araport" id="AT5G59900"/>
<dbReference type="TAIR" id="AT5G59900"/>
<dbReference type="eggNOG" id="KOG4197">
    <property type="taxonomic scope" value="Eukaryota"/>
</dbReference>
<dbReference type="HOGENOM" id="CLU_002706_49_10_1"/>
<dbReference type="InParanoid" id="Q9FJE6"/>
<dbReference type="OMA" id="CVLFREM"/>
<dbReference type="OrthoDB" id="185373at2759"/>
<dbReference type="PhylomeDB" id="Q9FJE6"/>
<dbReference type="PRO" id="PR:Q9FJE6"/>
<dbReference type="Proteomes" id="UP000006548">
    <property type="component" value="Chromosome 5"/>
</dbReference>
<dbReference type="ExpressionAtlas" id="Q9FJE6">
    <property type="expression patterns" value="baseline and differential"/>
</dbReference>
<dbReference type="Gene3D" id="1.25.40.10">
    <property type="entry name" value="Tetratricopeptide repeat domain"/>
    <property type="match status" value="8"/>
</dbReference>
<dbReference type="InterPro" id="IPR002885">
    <property type="entry name" value="Pentatricopeptide_rpt"/>
</dbReference>
<dbReference type="InterPro" id="IPR011990">
    <property type="entry name" value="TPR-like_helical_dom_sf"/>
</dbReference>
<dbReference type="NCBIfam" id="TIGR00756">
    <property type="entry name" value="PPR"/>
    <property type="match status" value="16"/>
</dbReference>
<dbReference type="PANTHER" id="PTHR47932">
    <property type="entry name" value="ATPASE EXPRESSION PROTEIN 3"/>
    <property type="match status" value="1"/>
</dbReference>
<dbReference type="PANTHER" id="PTHR47932:SF26">
    <property type="entry name" value="PENTACOTRIPEPTIDE-REPEAT REGION OF PRORP DOMAIN-CONTAINING PROTEIN"/>
    <property type="match status" value="1"/>
</dbReference>
<dbReference type="Pfam" id="PF01535">
    <property type="entry name" value="PPR"/>
    <property type="match status" value="1"/>
</dbReference>
<dbReference type="Pfam" id="PF12854">
    <property type="entry name" value="PPR_1"/>
    <property type="match status" value="2"/>
</dbReference>
<dbReference type="Pfam" id="PF13041">
    <property type="entry name" value="PPR_2"/>
    <property type="match status" value="8"/>
</dbReference>
<dbReference type="SUPFAM" id="SSF81901">
    <property type="entry name" value="HCP-like"/>
    <property type="match status" value="1"/>
</dbReference>
<dbReference type="PROSITE" id="PS51375">
    <property type="entry name" value="PPR"/>
    <property type="match status" value="22"/>
</dbReference>
<gene>
    <name type="ordered locus">At5g59900</name>
    <name type="ORF">MMN10.14</name>
</gene>
<comment type="similarity">
    <text evidence="2">Belongs to the PPR family. P subfamily.</text>
</comment>
<comment type="online information" name="Pentatricopeptide repeat proteins">
    <link uri="https://ppr.plantenergy.uwa.edu.au"/>
</comment>
<proteinExistence type="inferred from homology"/>